<gene>
    <name evidence="2" type="primary">besA</name>
    <name evidence="4" type="ordered locus">SCATT_p06910</name>
</gene>
<comment type="function">
    <text evidence="1">Involved in the biosynthesis of terminal alkyne-containing amino acids such as L-beta-ethynylserine, that are produced as antibiotics by S.cattleya. Catalyzes the ATP-dependent ligation of L-propargylglycine to L-glutamate to form the dipeptide L-gamma-glutamyl-L-propargylglycine. Is selective for L-propargylglycine over norvaline, allylglycine and the standard proteinogenic amino acids, except L-cysteine which can be used as a substrate to a lesser extent.</text>
</comment>
<comment type="catalytic activity">
    <reaction evidence="1">
        <text>L-propargylglycine + L-glutamate + ATP = L-gamma-glutamyl-L-propargylglycine + ADP + phosphate + H(+)</text>
        <dbReference type="Rhea" id="RHEA:59896"/>
        <dbReference type="ChEBI" id="CHEBI:15378"/>
        <dbReference type="ChEBI" id="CHEBI:29985"/>
        <dbReference type="ChEBI" id="CHEBI:30616"/>
        <dbReference type="ChEBI" id="CHEBI:43474"/>
        <dbReference type="ChEBI" id="CHEBI:143285"/>
        <dbReference type="ChEBI" id="CHEBI:143286"/>
        <dbReference type="ChEBI" id="CHEBI:456216"/>
    </reaction>
    <physiologicalReaction direction="left-to-right" evidence="1">
        <dbReference type="Rhea" id="RHEA:59897"/>
    </physiologicalReaction>
</comment>
<comment type="biophysicochemical properties">
    <kinetics>
        <KM evidence="1">0.49 mM for L-propargylglycine</KM>
        <KM evidence="1">4.9 mM for L-cysteine</KM>
        <text>kcat is 2.0 sec(-1) for the glutamylation of L-propargylglycine. kcat is 1.53 sec(-1) for the glutamylation of L-cysteine.</text>
    </kinetics>
</comment>
<comment type="pathway">
    <text evidence="1">Amino-acid metabolism.</text>
</comment>
<comment type="pathway">
    <text evidence="1">Antibiotic biosynthesis.</text>
</comment>
<comment type="disruption phenotype">
    <text evidence="1">Cells lacking this gene produce lowered levels of both L-propargylglycine and L-beta-ethynylserine, that are terminal alkyne-containing amino acids produced by wild-type S.cattleya.</text>
</comment>
<feature type="chain" id="PRO_0000447348" description="L-propargylglycine--L-glutamate ligase">
    <location>
        <begin position="1"/>
        <end position="482"/>
    </location>
</feature>
<evidence type="ECO:0000269" key="1">
    <source>
    </source>
</evidence>
<evidence type="ECO:0000303" key="2">
    <source>
    </source>
</evidence>
<evidence type="ECO:0000305" key="3">
    <source>
    </source>
</evidence>
<evidence type="ECO:0000312" key="4">
    <source>
        <dbReference type="EMBL" id="AEW98884.1"/>
    </source>
</evidence>
<accession>G8XHD8</accession>
<sequence length="482" mass="52271">MYGAGVVTRMNEAERFHMTDPGSTKILIYAFNYADRMLEEVPYLRYSAERSLCFLGDLRDPGTRLVVITSEAVDPATLDYHLRDVFRFDEPALADVRRRLTLLTPASRAARPLDSLVLEDEALVETLRRAVAERPAGTIVDFSASPATDELGRRTGATPEEGDHAFVARWGSKSGGKEICLRAGVAVPGGTSEVLRSEAEVVEAIHRLSCGTAAARRAMVKLDAITWAASIGNVLIDRDKLRHTGDLVGSAEVIRLPAEEFRRELAEQGAIVEEFLEEITDSPSGLGHIERDGTVRVVACHDQVLSGGQYWGCRFPADERWRPEITDAVRRTGEVLSGLGHRGAFGVDFVVAGERGLLAVEINLRKVGPSHVVRYAEALVGARVGADGMLRGADGRPVYYTHGRLLEPETLGKLNPRTAVERLRAEGLLYRHDTGEGVALHVLGALNACGFVELTALARSPEAADGYSRAAQALLTGPYPSA</sequence>
<dbReference type="EC" id="6.3.2.-" evidence="1"/>
<dbReference type="EMBL" id="CP003229">
    <property type="protein sequence ID" value="AEW98884.1"/>
    <property type="molecule type" value="Genomic_DNA"/>
</dbReference>
<dbReference type="PDB" id="8YI6">
    <property type="method" value="X-ray"/>
    <property type="resolution" value="3.60 A"/>
    <property type="chains" value="A/B=18-482"/>
</dbReference>
<dbReference type="PDBsum" id="8YI6"/>
<dbReference type="SMR" id="G8XHD8"/>
<dbReference type="KEGG" id="scy:SCATT_p06910"/>
<dbReference type="PATRIC" id="fig|1003195.29.peg.6486"/>
<dbReference type="HOGENOM" id="CLU_008013_0_0_11"/>
<dbReference type="Proteomes" id="UP000007842">
    <property type="component" value="Plasmid pSCATT"/>
</dbReference>
<dbReference type="GO" id="GO:0005524">
    <property type="term" value="F:ATP binding"/>
    <property type="evidence" value="ECO:0007669"/>
    <property type="project" value="UniProtKB-KW"/>
</dbReference>
<dbReference type="GO" id="GO:0062145">
    <property type="term" value="F:L-propargylglycine--L-glutamate ligase activity"/>
    <property type="evidence" value="ECO:0000314"/>
    <property type="project" value="UniProtKB"/>
</dbReference>
<dbReference type="GO" id="GO:0046872">
    <property type="term" value="F:metal ion binding"/>
    <property type="evidence" value="ECO:0007669"/>
    <property type="project" value="InterPro"/>
</dbReference>
<dbReference type="GO" id="GO:0017000">
    <property type="term" value="P:antibiotic biosynthetic process"/>
    <property type="evidence" value="ECO:0007669"/>
    <property type="project" value="UniProtKB-KW"/>
</dbReference>
<dbReference type="GO" id="GO:0062142">
    <property type="term" value="P:L-beta-ethynylserine biosynthetic process"/>
    <property type="evidence" value="ECO:0000315"/>
    <property type="project" value="UniProtKB"/>
</dbReference>
<dbReference type="Gene3D" id="3.30.470.20">
    <property type="entry name" value="ATP-grasp fold, B domain"/>
    <property type="match status" value="1"/>
</dbReference>
<dbReference type="InterPro" id="IPR003806">
    <property type="entry name" value="ATP-grasp_PylC-type"/>
</dbReference>
<dbReference type="InterPro" id="IPR053705">
    <property type="entry name" value="LpgL-glutamate_ligase"/>
</dbReference>
<dbReference type="InterPro" id="IPR041356">
    <property type="entry name" value="PGM1_C"/>
</dbReference>
<dbReference type="InterPro" id="IPR040754">
    <property type="entry name" value="PreAtp-grasp"/>
</dbReference>
<dbReference type="NCBIfam" id="NF042917">
    <property type="entry name" value="PAGG_GluLig_BesA"/>
    <property type="match status" value="1"/>
</dbReference>
<dbReference type="Pfam" id="PF02655">
    <property type="entry name" value="ATP-grasp_3"/>
    <property type="match status" value="1"/>
</dbReference>
<dbReference type="Pfam" id="PF18105">
    <property type="entry name" value="PGM1_C"/>
    <property type="match status" value="1"/>
</dbReference>
<dbReference type="Pfam" id="PF18604">
    <property type="entry name" value="PreAtp-grasp"/>
    <property type="match status" value="1"/>
</dbReference>
<dbReference type="SUPFAM" id="SSF56059">
    <property type="entry name" value="Glutathione synthetase ATP-binding domain-like"/>
    <property type="match status" value="1"/>
</dbReference>
<geneLocation type="plasmid">
    <name>pSCATT</name>
</geneLocation>
<protein>
    <recommendedName>
        <fullName evidence="3">L-propargylglycine--L-glutamate ligase</fullName>
        <ecNumber evidence="1">6.3.2.-</ecNumber>
    </recommendedName>
</protein>
<organism>
    <name type="scientific">Streptantibioticus cattleyicolor (strain ATCC 35852 / DSM 46488 / JCM 4925 / NBRC 14057 / NRRL 8057)</name>
    <name type="common">Streptomyces cattleya</name>
    <dbReference type="NCBI Taxonomy" id="1003195"/>
    <lineage>
        <taxon>Bacteria</taxon>
        <taxon>Bacillati</taxon>
        <taxon>Actinomycetota</taxon>
        <taxon>Actinomycetes</taxon>
        <taxon>Kitasatosporales</taxon>
        <taxon>Streptomycetaceae</taxon>
        <taxon>Streptantibioticus</taxon>
    </lineage>
</organism>
<name>BESA_STREN</name>
<keyword id="KW-0002">3D-structure</keyword>
<keyword id="KW-0028">Amino-acid biosynthesis</keyword>
<keyword id="KW-0045">Antibiotic biosynthesis</keyword>
<keyword id="KW-0067">ATP-binding</keyword>
<keyword id="KW-0436">Ligase</keyword>
<keyword id="KW-0547">Nucleotide-binding</keyword>
<keyword id="KW-0614">Plasmid</keyword>
<keyword id="KW-1185">Reference proteome</keyword>
<proteinExistence type="evidence at protein level"/>
<reference key="1">
    <citation type="submission" date="2011-12" db="EMBL/GenBank/DDBJ databases">
        <title>Complete genome sequence of Streptomyces cattleya strain DSM 46488.</title>
        <authorList>
            <person name="Ou H.-Y."/>
            <person name="Li P."/>
            <person name="Zhao C."/>
            <person name="O'Hagan D."/>
            <person name="Deng Z."/>
        </authorList>
    </citation>
    <scope>NUCLEOTIDE SEQUENCE [LARGE SCALE GENOMIC DNA]</scope>
    <source>
        <strain>ATCC 35852 / DSM 46488 / JCM 4925 / NBRC 14057 / NCIMB 11928 / NRRL 8057 / MA-4297</strain>
    </source>
</reference>
<reference key="2">
    <citation type="journal article" date="2019" name="Nature">
        <title>Discovery of a pathway for terminal-alkyne amino acid biosynthesis.</title>
        <authorList>
            <person name="Marchand J.A."/>
            <person name="Neugebauer M.E."/>
            <person name="Ing M.C."/>
            <person name="Lin C.I."/>
            <person name="Pelton J.G."/>
            <person name="Chang M.C.Y."/>
        </authorList>
    </citation>
    <scope>FUNCTION</scope>
    <scope>CATALYTIC ACTIVITY</scope>
    <scope>SUBSTRATE SPECIFICITY</scope>
    <scope>BIOPHYSICOCHEMICAL PROPERTIES</scope>
    <scope>PATHWAY</scope>
    <scope>DISRUPTION PHENOTYPE</scope>
    <source>
        <strain>ATCC 35852 / DSM 46488 / JCM 4925 / NBRC 14057 / NCIMB 11928 / NRRL 8057 / MA-4297</strain>
    </source>
</reference>